<protein>
    <recommendedName>
        <fullName evidence="1">Small ribosomal subunit protein uS4</fullName>
    </recommendedName>
    <alternativeName>
        <fullName evidence="2">30S ribosomal protein S4</fullName>
    </alternativeName>
</protein>
<name>RS4_STAES</name>
<keyword id="KW-0687">Ribonucleoprotein</keyword>
<keyword id="KW-0689">Ribosomal protein</keyword>
<keyword id="KW-0694">RNA-binding</keyword>
<keyword id="KW-0699">rRNA-binding</keyword>
<feature type="chain" id="PRO_0000132462" description="Small ribosomal subunit protein uS4">
    <location>
        <begin position="1"/>
        <end position="200"/>
    </location>
</feature>
<feature type="domain" description="S4 RNA-binding" evidence="1">
    <location>
        <begin position="92"/>
        <end position="155"/>
    </location>
</feature>
<organism>
    <name type="scientific">Staphylococcus epidermidis (strain ATCC 12228 / FDA PCI 1200)</name>
    <dbReference type="NCBI Taxonomy" id="176280"/>
    <lineage>
        <taxon>Bacteria</taxon>
        <taxon>Bacillati</taxon>
        <taxon>Bacillota</taxon>
        <taxon>Bacilli</taxon>
        <taxon>Bacillales</taxon>
        <taxon>Staphylococcaceae</taxon>
        <taxon>Staphylococcus</taxon>
    </lineage>
</organism>
<comment type="function">
    <text evidence="1">One of the primary rRNA binding proteins, it binds directly to 16S rRNA where it nucleates assembly of the body of the 30S subunit.</text>
</comment>
<comment type="function">
    <text evidence="1">With S5 and S12 plays an important role in translational accuracy.</text>
</comment>
<comment type="subunit">
    <text evidence="1">Part of the 30S ribosomal subunit. Contacts protein S5. The interaction surface between S4 and S5 is involved in control of translational fidelity.</text>
</comment>
<comment type="similarity">
    <text evidence="1">Belongs to the universal ribosomal protein uS4 family.</text>
</comment>
<gene>
    <name evidence="1" type="primary">rpsD</name>
    <name type="ordered locus">SE_1396</name>
</gene>
<dbReference type="EMBL" id="AE015929">
    <property type="protein sequence ID" value="AAO04995.1"/>
    <property type="molecule type" value="Genomic_DNA"/>
</dbReference>
<dbReference type="RefSeq" id="NP_764951.1">
    <property type="nucleotide sequence ID" value="NC_004461.1"/>
</dbReference>
<dbReference type="RefSeq" id="WP_001830798.1">
    <property type="nucleotide sequence ID" value="NZ_WBME01000009.1"/>
</dbReference>
<dbReference type="SMR" id="Q8CS54"/>
<dbReference type="GeneID" id="50018492"/>
<dbReference type="KEGG" id="sep:SE_1396"/>
<dbReference type="PATRIC" id="fig|176280.10.peg.1364"/>
<dbReference type="eggNOG" id="COG0522">
    <property type="taxonomic scope" value="Bacteria"/>
</dbReference>
<dbReference type="HOGENOM" id="CLU_092403_0_1_9"/>
<dbReference type="OrthoDB" id="9803672at2"/>
<dbReference type="Proteomes" id="UP000001411">
    <property type="component" value="Chromosome"/>
</dbReference>
<dbReference type="GO" id="GO:0015935">
    <property type="term" value="C:small ribosomal subunit"/>
    <property type="evidence" value="ECO:0007669"/>
    <property type="project" value="InterPro"/>
</dbReference>
<dbReference type="GO" id="GO:0019843">
    <property type="term" value="F:rRNA binding"/>
    <property type="evidence" value="ECO:0007669"/>
    <property type="project" value="UniProtKB-UniRule"/>
</dbReference>
<dbReference type="GO" id="GO:0003735">
    <property type="term" value="F:structural constituent of ribosome"/>
    <property type="evidence" value="ECO:0007669"/>
    <property type="project" value="InterPro"/>
</dbReference>
<dbReference type="GO" id="GO:0042274">
    <property type="term" value="P:ribosomal small subunit biogenesis"/>
    <property type="evidence" value="ECO:0007669"/>
    <property type="project" value="TreeGrafter"/>
</dbReference>
<dbReference type="GO" id="GO:0006412">
    <property type="term" value="P:translation"/>
    <property type="evidence" value="ECO:0007669"/>
    <property type="project" value="UniProtKB-UniRule"/>
</dbReference>
<dbReference type="CDD" id="cd00165">
    <property type="entry name" value="S4"/>
    <property type="match status" value="1"/>
</dbReference>
<dbReference type="FunFam" id="1.10.1050.10:FF:000001">
    <property type="entry name" value="30S ribosomal protein S4"/>
    <property type="match status" value="1"/>
</dbReference>
<dbReference type="FunFam" id="3.10.290.10:FF:000001">
    <property type="entry name" value="30S ribosomal protein S4"/>
    <property type="match status" value="1"/>
</dbReference>
<dbReference type="Gene3D" id="1.10.1050.10">
    <property type="entry name" value="Ribosomal Protein S4 Delta 41, Chain A, domain 1"/>
    <property type="match status" value="1"/>
</dbReference>
<dbReference type="Gene3D" id="3.10.290.10">
    <property type="entry name" value="RNA-binding S4 domain"/>
    <property type="match status" value="1"/>
</dbReference>
<dbReference type="HAMAP" id="MF_01306_B">
    <property type="entry name" value="Ribosomal_uS4_B"/>
    <property type="match status" value="1"/>
</dbReference>
<dbReference type="InterPro" id="IPR022801">
    <property type="entry name" value="Ribosomal_uS4"/>
</dbReference>
<dbReference type="InterPro" id="IPR005709">
    <property type="entry name" value="Ribosomal_uS4_bac-type"/>
</dbReference>
<dbReference type="InterPro" id="IPR018079">
    <property type="entry name" value="Ribosomal_uS4_CS"/>
</dbReference>
<dbReference type="InterPro" id="IPR001912">
    <property type="entry name" value="Ribosomal_uS4_N"/>
</dbReference>
<dbReference type="InterPro" id="IPR002942">
    <property type="entry name" value="S4_RNA-bd"/>
</dbReference>
<dbReference type="InterPro" id="IPR036986">
    <property type="entry name" value="S4_RNA-bd_sf"/>
</dbReference>
<dbReference type="NCBIfam" id="NF003717">
    <property type="entry name" value="PRK05327.1"/>
    <property type="match status" value="1"/>
</dbReference>
<dbReference type="NCBIfam" id="TIGR01017">
    <property type="entry name" value="rpsD_bact"/>
    <property type="match status" value="1"/>
</dbReference>
<dbReference type="PANTHER" id="PTHR11831">
    <property type="entry name" value="30S 40S RIBOSOMAL PROTEIN"/>
    <property type="match status" value="1"/>
</dbReference>
<dbReference type="PANTHER" id="PTHR11831:SF4">
    <property type="entry name" value="SMALL RIBOSOMAL SUBUNIT PROTEIN US4M"/>
    <property type="match status" value="1"/>
</dbReference>
<dbReference type="Pfam" id="PF00163">
    <property type="entry name" value="Ribosomal_S4"/>
    <property type="match status" value="1"/>
</dbReference>
<dbReference type="Pfam" id="PF01479">
    <property type="entry name" value="S4"/>
    <property type="match status" value="1"/>
</dbReference>
<dbReference type="SMART" id="SM01390">
    <property type="entry name" value="Ribosomal_S4"/>
    <property type="match status" value="1"/>
</dbReference>
<dbReference type="SMART" id="SM00363">
    <property type="entry name" value="S4"/>
    <property type="match status" value="1"/>
</dbReference>
<dbReference type="SUPFAM" id="SSF55174">
    <property type="entry name" value="Alpha-L RNA-binding motif"/>
    <property type="match status" value="1"/>
</dbReference>
<dbReference type="PROSITE" id="PS00632">
    <property type="entry name" value="RIBOSOMAL_S4"/>
    <property type="match status" value="1"/>
</dbReference>
<dbReference type="PROSITE" id="PS50889">
    <property type="entry name" value="S4"/>
    <property type="match status" value="1"/>
</dbReference>
<sequence length="200" mass="23105">MARFRGSNWKKSRRLGISLSGTGKELEKRPYAPGQHGPNQRKKLSEYGLQLREKQKLRYLYGMTERQFRNTFDIAGKQYGVHGENFMILLASRLDAVVYSLGLARTRRQARQLVNHGHIEVDGGRVDIPSYSLKPGQVITVREKSQNLDIIKESVEINNFVPEYLDFDADNLKGTFVRFPERSELPAEINEQLIVEYYSR</sequence>
<accession>Q8CS54</accession>
<evidence type="ECO:0000255" key="1">
    <source>
        <dbReference type="HAMAP-Rule" id="MF_01306"/>
    </source>
</evidence>
<evidence type="ECO:0000305" key="2"/>
<proteinExistence type="inferred from homology"/>
<reference key="1">
    <citation type="journal article" date="2003" name="Mol. Microbiol.">
        <title>Genome-based analysis of virulence genes in a non-biofilm-forming Staphylococcus epidermidis strain (ATCC 12228).</title>
        <authorList>
            <person name="Zhang Y.-Q."/>
            <person name="Ren S.-X."/>
            <person name="Li H.-L."/>
            <person name="Wang Y.-X."/>
            <person name="Fu G."/>
            <person name="Yang J."/>
            <person name="Qin Z.-Q."/>
            <person name="Miao Y.-G."/>
            <person name="Wang W.-Y."/>
            <person name="Chen R.-S."/>
            <person name="Shen Y."/>
            <person name="Chen Z."/>
            <person name="Yuan Z.-H."/>
            <person name="Zhao G.-P."/>
            <person name="Qu D."/>
            <person name="Danchin A."/>
            <person name="Wen Y.-M."/>
        </authorList>
    </citation>
    <scope>NUCLEOTIDE SEQUENCE [LARGE SCALE GENOMIC DNA]</scope>
    <source>
        <strain>ATCC 12228 / FDA PCI 1200</strain>
    </source>
</reference>